<keyword id="KW-0067">ATP-binding</keyword>
<keyword id="KW-0131">Cell cycle</keyword>
<keyword id="KW-0132">Cell division</keyword>
<keyword id="KW-0133">Cell shape</keyword>
<keyword id="KW-0961">Cell wall biogenesis/degradation</keyword>
<keyword id="KW-0963">Cytoplasm</keyword>
<keyword id="KW-0436">Ligase</keyword>
<keyword id="KW-0547">Nucleotide-binding</keyword>
<keyword id="KW-0573">Peptidoglycan synthesis</keyword>
<evidence type="ECO:0000255" key="1">
    <source>
        <dbReference type="HAMAP-Rule" id="MF_00639"/>
    </source>
</evidence>
<organism>
    <name type="scientific">Helicobacter pylori (strain J99 / ATCC 700824)</name>
    <name type="common">Campylobacter pylori J99</name>
    <dbReference type="NCBI Taxonomy" id="85963"/>
    <lineage>
        <taxon>Bacteria</taxon>
        <taxon>Pseudomonadati</taxon>
        <taxon>Campylobacterota</taxon>
        <taxon>Epsilonproteobacteria</taxon>
        <taxon>Campylobacterales</taxon>
        <taxon>Helicobacteraceae</taxon>
        <taxon>Helicobacter</taxon>
    </lineage>
</organism>
<feature type="chain" id="PRO_0000109026" description="UDP-N-acetylmuramoylalanine--D-glutamate ligase">
    <location>
        <begin position="1"/>
        <end position="422"/>
    </location>
</feature>
<feature type="binding site" evidence="1">
    <location>
        <begin position="102"/>
        <end position="108"/>
    </location>
    <ligand>
        <name>ATP</name>
        <dbReference type="ChEBI" id="CHEBI:30616"/>
    </ligand>
</feature>
<name>MURD_HELPJ</name>
<protein>
    <recommendedName>
        <fullName evidence="1">UDP-N-acetylmuramoylalanine--D-glutamate ligase</fullName>
        <ecNumber evidence="1">6.3.2.9</ecNumber>
    </recommendedName>
    <alternativeName>
        <fullName evidence="1">D-glutamic acid-adding enzyme</fullName>
    </alternativeName>
    <alternativeName>
        <fullName evidence="1">UDP-N-acetylmuramoyl-L-alanyl-D-glutamate synthetase</fullName>
    </alternativeName>
</protein>
<proteinExistence type="inferred from homology"/>
<sequence length="422" mass="47947">MKISLLGHGKTTLALGRFFKKNHNEVKFFDDKFPAFFKDSEGFLCYPSKDFNPNDSQLEIVSPGISFTHPLVMKAKHLMSEYDYIDSLFDHSFTPTMISISGTNGKTTTTEMLTTLLEDFKAVSGGNIGTPLIELFEKRSPLWVLETSSFSLHYTNKAYPLIYLLINVEADHLTWHCNFENYLNAKLKVLTLMPKTSLAILPLKFKEHPIVQNSQAQKIFFDKSEEVLECLKIPSNALFFKGAFLLDAALALLVYEQFLKIKNLKWQDYRENALKRLNAFKIGSHKMEEFRDKQGRLWVDDSKATNIDATLQALKTFKNQKIHLILGGDIKGVNLTPLFEEFKNYKISLYAIGSSASIIQALALEFNVSCQVCLKLEKAVQEIKSVLLQNEVALLSPSAASLDQFSSYKERGEKFKAFVLKD</sequence>
<gene>
    <name evidence="1" type="primary">murD</name>
    <name type="ordered locus">jhp_0446</name>
</gene>
<reference key="1">
    <citation type="journal article" date="1999" name="Nature">
        <title>Genomic sequence comparison of two unrelated isolates of the human gastric pathogen Helicobacter pylori.</title>
        <authorList>
            <person name="Alm R.A."/>
            <person name="Ling L.-S.L."/>
            <person name="Moir D.T."/>
            <person name="King B.L."/>
            <person name="Brown E.D."/>
            <person name="Doig P.C."/>
            <person name="Smith D.R."/>
            <person name="Noonan B."/>
            <person name="Guild B.C."/>
            <person name="deJonge B.L."/>
            <person name="Carmel G."/>
            <person name="Tummino P.J."/>
            <person name="Caruso A."/>
            <person name="Uria-Nickelsen M."/>
            <person name="Mills D.M."/>
            <person name="Ives C."/>
            <person name="Gibson R."/>
            <person name="Merberg D."/>
            <person name="Mills S.D."/>
            <person name="Jiang Q."/>
            <person name="Taylor D.E."/>
            <person name="Vovis G.F."/>
            <person name="Trust T.J."/>
        </authorList>
    </citation>
    <scope>NUCLEOTIDE SEQUENCE [LARGE SCALE GENOMIC DNA]</scope>
    <source>
        <strain>J99 / ATCC 700824</strain>
    </source>
</reference>
<dbReference type="EC" id="6.3.2.9" evidence="1"/>
<dbReference type="EMBL" id="AE001439">
    <property type="protein sequence ID" value="AAD06024.1"/>
    <property type="molecule type" value="Genomic_DNA"/>
</dbReference>
<dbReference type="PIR" id="C71930">
    <property type="entry name" value="C71930"/>
</dbReference>
<dbReference type="RefSeq" id="WP_000703487.1">
    <property type="nucleotide sequence ID" value="NC_000921.1"/>
</dbReference>
<dbReference type="SMR" id="Q9ZLY0"/>
<dbReference type="KEGG" id="hpj:jhp_0446"/>
<dbReference type="PATRIC" id="fig|85963.30.peg.559"/>
<dbReference type="eggNOG" id="COG0771">
    <property type="taxonomic scope" value="Bacteria"/>
</dbReference>
<dbReference type="UniPathway" id="UPA00219"/>
<dbReference type="Proteomes" id="UP000000804">
    <property type="component" value="Chromosome"/>
</dbReference>
<dbReference type="GO" id="GO:0005737">
    <property type="term" value="C:cytoplasm"/>
    <property type="evidence" value="ECO:0007669"/>
    <property type="project" value="UniProtKB-SubCell"/>
</dbReference>
<dbReference type="GO" id="GO:0005524">
    <property type="term" value="F:ATP binding"/>
    <property type="evidence" value="ECO:0007669"/>
    <property type="project" value="UniProtKB-UniRule"/>
</dbReference>
<dbReference type="GO" id="GO:0004326">
    <property type="term" value="F:tetrahydrofolylpolyglutamate synthase activity"/>
    <property type="evidence" value="ECO:0007669"/>
    <property type="project" value="InterPro"/>
</dbReference>
<dbReference type="GO" id="GO:0008764">
    <property type="term" value="F:UDP-N-acetylmuramoylalanine-D-glutamate ligase activity"/>
    <property type="evidence" value="ECO:0007669"/>
    <property type="project" value="UniProtKB-UniRule"/>
</dbReference>
<dbReference type="GO" id="GO:0051301">
    <property type="term" value="P:cell division"/>
    <property type="evidence" value="ECO:0007669"/>
    <property type="project" value="UniProtKB-KW"/>
</dbReference>
<dbReference type="GO" id="GO:0071555">
    <property type="term" value="P:cell wall organization"/>
    <property type="evidence" value="ECO:0007669"/>
    <property type="project" value="UniProtKB-KW"/>
</dbReference>
<dbReference type="GO" id="GO:0009252">
    <property type="term" value="P:peptidoglycan biosynthetic process"/>
    <property type="evidence" value="ECO:0007669"/>
    <property type="project" value="UniProtKB-UniRule"/>
</dbReference>
<dbReference type="GO" id="GO:0008360">
    <property type="term" value="P:regulation of cell shape"/>
    <property type="evidence" value="ECO:0007669"/>
    <property type="project" value="UniProtKB-KW"/>
</dbReference>
<dbReference type="Gene3D" id="3.90.190.20">
    <property type="entry name" value="Mur ligase, C-terminal domain"/>
    <property type="match status" value="1"/>
</dbReference>
<dbReference type="Gene3D" id="3.40.1190.10">
    <property type="entry name" value="Mur-like, catalytic domain"/>
    <property type="match status" value="1"/>
</dbReference>
<dbReference type="HAMAP" id="MF_00639">
    <property type="entry name" value="MurD"/>
    <property type="match status" value="1"/>
</dbReference>
<dbReference type="InterPro" id="IPR018109">
    <property type="entry name" value="Folylpolyglutamate_synth_CS"/>
</dbReference>
<dbReference type="InterPro" id="IPR036565">
    <property type="entry name" value="Mur-like_cat_sf"/>
</dbReference>
<dbReference type="InterPro" id="IPR036615">
    <property type="entry name" value="Mur_ligase_C_dom_sf"/>
</dbReference>
<dbReference type="InterPro" id="IPR013221">
    <property type="entry name" value="Mur_ligase_cen"/>
</dbReference>
<dbReference type="InterPro" id="IPR005762">
    <property type="entry name" value="MurD"/>
</dbReference>
<dbReference type="NCBIfam" id="TIGR01087">
    <property type="entry name" value="murD"/>
    <property type="match status" value="1"/>
</dbReference>
<dbReference type="PANTHER" id="PTHR43692">
    <property type="entry name" value="UDP-N-ACETYLMURAMOYLALANINE--D-GLUTAMATE LIGASE"/>
    <property type="match status" value="1"/>
</dbReference>
<dbReference type="PANTHER" id="PTHR43692:SF1">
    <property type="entry name" value="UDP-N-ACETYLMURAMOYLALANINE--D-GLUTAMATE LIGASE"/>
    <property type="match status" value="1"/>
</dbReference>
<dbReference type="Pfam" id="PF08245">
    <property type="entry name" value="Mur_ligase_M"/>
    <property type="match status" value="1"/>
</dbReference>
<dbReference type="SUPFAM" id="SSF53623">
    <property type="entry name" value="MurD-like peptide ligases, catalytic domain"/>
    <property type="match status" value="1"/>
</dbReference>
<dbReference type="SUPFAM" id="SSF53244">
    <property type="entry name" value="MurD-like peptide ligases, peptide-binding domain"/>
    <property type="match status" value="1"/>
</dbReference>
<accession>Q9ZLY0</accession>
<comment type="function">
    <text evidence="1">Cell wall formation. Catalyzes the addition of glutamate to the nucleotide precursor UDP-N-acetylmuramoyl-L-alanine (UMA).</text>
</comment>
<comment type="catalytic activity">
    <reaction evidence="1">
        <text>UDP-N-acetyl-alpha-D-muramoyl-L-alanine + D-glutamate + ATP = UDP-N-acetyl-alpha-D-muramoyl-L-alanyl-D-glutamate + ADP + phosphate + H(+)</text>
        <dbReference type="Rhea" id="RHEA:16429"/>
        <dbReference type="ChEBI" id="CHEBI:15378"/>
        <dbReference type="ChEBI" id="CHEBI:29986"/>
        <dbReference type="ChEBI" id="CHEBI:30616"/>
        <dbReference type="ChEBI" id="CHEBI:43474"/>
        <dbReference type="ChEBI" id="CHEBI:83898"/>
        <dbReference type="ChEBI" id="CHEBI:83900"/>
        <dbReference type="ChEBI" id="CHEBI:456216"/>
        <dbReference type="EC" id="6.3.2.9"/>
    </reaction>
</comment>
<comment type="pathway">
    <text evidence="1">Cell wall biogenesis; peptidoglycan biosynthesis.</text>
</comment>
<comment type="subcellular location">
    <subcellularLocation>
        <location evidence="1">Cytoplasm</location>
    </subcellularLocation>
</comment>
<comment type="similarity">
    <text evidence="1">Belongs to the MurCDEF family.</text>
</comment>